<proteinExistence type="inferred from homology"/>
<gene>
    <name evidence="1" type="primary">rraA</name>
    <name type="ordered locus">ESA_03832</name>
</gene>
<sequence>MKYDTSELCDIYQEEVNVVEPLFSNFGGRSSFGGQIITVKCFEDNGLLYELLEENGRGRVLLVDGGGSVRRALIDAELARLAVQNEWEGLVVYGAVRQVDDLAELDVGIQALAAIPVGAAGEGIGESDVRVNFGGVTFFSGDHLYADNTGIILSEDPLDIE</sequence>
<dbReference type="EMBL" id="CP000783">
    <property type="protein sequence ID" value="ABU79018.1"/>
    <property type="molecule type" value="Genomic_DNA"/>
</dbReference>
<dbReference type="RefSeq" id="WP_004385735.1">
    <property type="nucleotide sequence ID" value="NC_009778.1"/>
</dbReference>
<dbReference type="SMR" id="A7ML69"/>
<dbReference type="GeneID" id="56732480"/>
<dbReference type="KEGG" id="esa:ESA_03832"/>
<dbReference type="HOGENOM" id="CLU_072626_4_0_6"/>
<dbReference type="Proteomes" id="UP000000260">
    <property type="component" value="Chromosome"/>
</dbReference>
<dbReference type="GO" id="GO:0005829">
    <property type="term" value="C:cytosol"/>
    <property type="evidence" value="ECO:0007669"/>
    <property type="project" value="TreeGrafter"/>
</dbReference>
<dbReference type="GO" id="GO:0060698">
    <property type="term" value="F:endoribonuclease inhibitor activity"/>
    <property type="evidence" value="ECO:0007669"/>
    <property type="project" value="UniProtKB-UniRule"/>
</dbReference>
<dbReference type="GO" id="GO:0019899">
    <property type="term" value="F:enzyme binding"/>
    <property type="evidence" value="ECO:0007669"/>
    <property type="project" value="UniProtKB-UniRule"/>
</dbReference>
<dbReference type="GO" id="GO:1902369">
    <property type="term" value="P:negative regulation of RNA catabolic process"/>
    <property type="evidence" value="ECO:0007669"/>
    <property type="project" value="TreeGrafter"/>
</dbReference>
<dbReference type="CDD" id="cd16841">
    <property type="entry name" value="RraA_family"/>
    <property type="match status" value="1"/>
</dbReference>
<dbReference type="FunFam" id="3.50.30.40:FF:000001">
    <property type="entry name" value="Regulator of ribonuclease activity A"/>
    <property type="match status" value="1"/>
</dbReference>
<dbReference type="Gene3D" id="3.50.30.40">
    <property type="entry name" value="Ribonuclease E inhibitor RraA/RraA-like"/>
    <property type="match status" value="1"/>
</dbReference>
<dbReference type="HAMAP" id="MF_00471">
    <property type="entry name" value="RraA"/>
    <property type="match status" value="1"/>
</dbReference>
<dbReference type="InterPro" id="IPR010203">
    <property type="entry name" value="RraA"/>
</dbReference>
<dbReference type="InterPro" id="IPR005493">
    <property type="entry name" value="RraA/RraA-like"/>
</dbReference>
<dbReference type="InterPro" id="IPR036704">
    <property type="entry name" value="RraA/RraA-like_sf"/>
</dbReference>
<dbReference type="InterPro" id="IPR014339">
    <property type="entry name" value="RraA_gpbac"/>
</dbReference>
<dbReference type="NCBIfam" id="TIGR01935">
    <property type="entry name" value="NOT-MenG"/>
    <property type="match status" value="1"/>
</dbReference>
<dbReference type="NCBIfam" id="NF006875">
    <property type="entry name" value="PRK09372.1"/>
    <property type="match status" value="1"/>
</dbReference>
<dbReference type="NCBIfam" id="TIGR02998">
    <property type="entry name" value="RraA_entero"/>
    <property type="match status" value="1"/>
</dbReference>
<dbReference type="PANTHER" id="PTHR33254">
    <property type="entry name" value="4-HYDROXY-4-METHYL-2-OXOGLUTARATE ALDOLASE 3-RELATED"/>
    <property type="match status" value="1"/>
</dbReference>
<dbReference type="PANTHER" id="PTHR33254:SF29">
    <property type="entry name" value="REGULATOR OF RIBONUCLEASE ACTIVITY A"/>
    <property type="match status" value="1"/>
</dbReference>
<dbReference type="Pfam" id="PF03737">
    <property type="entry name" value="RraA-like"/>
    <property type="match status" value="1"/>
</dbReference>
<dbReference type="SUPFAM" id="SSF89562">
    <property type="entry name" value="RraA-like"/>
    <property type="match status" value="1"/>
</dbReference>
<accession>A7ML69</accession>
<name>RRAA_CROS8</name>
<keyword id="KW-0963">Cytoplasm</keyword>
<keyword id="KW-1185">Reference proteome</keyword>
<evidence type="ECO:0000255" key="1">
    <source>
        <dbReference type="HAMAP-Rule" id="MF_00471"/>
    </source>
</evidence>
<protein>
    <recommendedName>
        <fullName evidence="1">Regulator of ribonuclease activity A</fullName>
    </recommendedName>
</protein>
<reference key="1">
    <citation type="journal article" date="2010" name="PLoS ONE">
        <title>Genome sequence of Cronobacter sakazakii BAA-894 and comparative genomic hybridization analysis with other Cronobacter species.</title>
        <authorList>
            <person name="Kucerova E."/>
            <person name="Clifton S.W."/>
            <person name="Xia X.Q."/>
            <person name="Long F."/>
            <person name="Porwollik S."/>
            <person name="Fulton L."/>
            <person name="Fronick C."/>
            <person name="Minx P."/>
            <person name="Kyung K."/>
            <person name="Warren W."/>
            <person name="Fulton R."/>
            <person name="Feng D."/>
            <person name="Wollam A."/>
            <person name="Shah N."/>
            <person name="Bhonagiri V."/>
            <person name="Nash W.E."/>
            <person name="Hallsworth-Pepin K."/>
            <person name="Wilson R.K."/>
            <person name="McClelland M."/>
            <person name="Forsythe S.J."/>
        </authorList>
    </citation>
    <scope>NUCLEOTIDE SEQUENCE [LARGE SCALE GENOMIC DNA]</scope>
    <source>
        <strain>ATCC BAA-894</strain>
    </source>
</reference>
<comment type="function">
    <text evidence="1">Globally modulates RNA abundance by binding to RNase E (Rne) and regulating its endonucleolytic activity. Can modulate Rne action in a substrate-dependent manner by altering the composition of the degradosome. Modulates RNA-binding and helicase activities of the degradosome.</text>
</comment>
<comment type="subunit">
    <text evidence="1">Homotrimer. Binds to both RNA-binding sites in the C-terminal region of Rne and to RhlB.</text>
</comment>
<comment type="subcellular location">
    <subcellularLocation>
        <location evidence="1">Cytoplasm</location>
    </subcellularLocation>
</comment>
<comment type="similarity">
    <text evidence="1">Belongs to the RraA family.</text>
</comment>
<organism>
    <name type="scientific">Cronobacter sakazakii (strain ATCC BAA-894)</name>
    <name type="common">Enterobacter sakazakii</name>
    <dbReference type="NCBI Taxonomy" id="290339"/>
    <lineage>
        <taxon>Bacteria</taxon>
        <taxon>Pseudomonadati</taxon>
        <taxon>Pseudomonadota</taxon>
        <taxon>Gammaproteobacteria</taxon>
        <taxon>Enterobacterales</taxon>
        <taxon>Enterobacteriaceae</taxon>
        <taxon>Cronobacter</taxon>
    </lineage>
</organism>
<feature type="chain" id="PRO_1000013839" description="Regulator of ribonuclease activity A">
    <location>
        <begin position="1"/>
        <end position="161"/>
    </location>
</feature>